<protein>
    <recommendedName>
        <fullName>Uncharacterized protein ORF148</fullName>
    </recommendedName>
</protein>
<name>Y148_TNAVC</name>
<sequence length="266" mass="29917">MTDVQKILKIVKQHMFKPKQTLARNEYKEAIVVPLGINEVQDLSDFTEEEKQLLINNDGWDVATLEQVYQFIMKTASWMASSHGGQSAPPPMSYFRQQQQPLPPQQRIYPQLNQTTTLQPQPQQPIIVNPIPAPAPAPATNNNNSLCSRYQICDIGSLQGVNDENLVFFYPSHTLMDKTKLLSVVLNFSNPVVGEYKVQMVNALNTTSPPRDIHKFTGTKSNVIVISLSEVLTTQNSVYFKMTPTPVDAKGNRPLIRMQVSMECSK</sequence>
<organism>
    <name type="scientific">Trichoplusia ni ascovirus 2c</name>
    <name type="common">TnAV-2c</name>
    <dbReference type="NCBI Taxonomy" id="328615"/>
    <lineage>
        <taxon>Viruses</taxon>
        <taxon>Varidnaviria</taxon>
        <taxon>Bamfordvirae</taxon>
        <taxon>Nucleocytoviricota</taxon>
        <taxon>Megaviricetes</taxon>
        <taxon>Pimascovirales</taxon>
        <taxon>Ascoviridae</taxon>
        <taxon>Ascovirus</taxon>
    </lineage>
</organism>
<evidence type="ECO:0000305" key="1"/>
<feature type="chain" id="PRO_0000332720" description="Uncharacterized protein ORF148">
    <location>
        <begin position="1"/>
        <end position="266"/>
    </location>
</feature>
<accession>Q06VD5</accession>
<keyword id="KW-1185">Reference proteome</keyword>
<reference key="1">
    <citation type="journal article" date="2006" name="Virology">
        <title>Sequence and organization of the Trichoplusia ni ascovirus 2c (Ascoviridae) genome.</title>
        <authorList>
            <person name="Wang L."/>
            <person name="Xue J."/>
            <person name="Seaborn C.P."/>
            <person name="Arif B.M."/>
            <person name="Cheng X.W."/>
        </authorList>
    </citation>
    <scope>NUCLEOTIDE SEQUENCE [LARGE SCALE GENOMIC DNA]</scope>
</reference>
<dbReference type="EMBL" id="DQ517337">
    <property type="protein sequence ID" value="ABF70664.1"/>
    <property type="molecule type" value="Genomic_DNA"/>
</dbReference>
<dbReference type="RefSeq" id="YP_803370.1">
    <property type="nucleotide sequence ID" value="NC_008518.1"/>
</dbReference>
<dbReference type="KEGG" id="vg:5141679"/>
<dbReference type="OrthoDB" id="33193at10239"/>
<dbReference type="Proteomes" id="UP000001323">
    <property type="component" value="Genome"/>
</dbReference>
<proteinExistence type="inferred from homology"/>
<organismHost>
    <name type="scientific">Noctuidae</name>
    <name type="common">owlet moths</name>
    <dbReference type="NCBI Taxonomy" id="7100"/>
</organismHost>
<gene>
    <name type="ORF">ORF148</name>
</gene>
<comment type="similarity">
    <text evidence="1">Belongs to the ascovirus HvAV ORF59 family.</text>
</comment>